<comment type="function">
    <text evidence="1">Participates in cysteine desulfuration mediated by SufS. Cysteine desulfuration mobilizes sulfur from L-cysteine to yield L-alanine and constitutes an essential step in sulfur metabolism for biosynthesis of a variety of sulfur-containing biomolecules. Functions as a sulfur acceptor for SufS, by mediating the direct transfer of the sulfur atom from the S-sulfanylcysteine of SufS, an intermediate product of cysteine desulfuration process.</text>
</comment>
<comment type="pathway">
    <text evidence="1">Cofactor biosynthesis; iron-sulfur cluster biosynthesis.</text>
</comment>
<comment type="subunit">
    <text evidence="1">Homodimer. Interacts with SufS.</text>
</comment>
<comment type="subcellular location">
    <subcellularLocation>
        <location evidence="1">Cytoplasm</location>
    </subcellularLocation>
</comment>
<comment type="similarity">
    <text evidence="1">Belongs to the SufE family.</text>
</comment>
<gene>
    <name evidence="1" type="primary">sufE</name>
    <name type="ordered locus">SFV_1702</name>
</gene>
<reference key="1">
    <citation type="journal article" date="2006" name="BMC Genomics">
        <title>Complete genome sequence of Shigella flexneri 5b and comparison with Shigella flexneri 2a.</title>
        <authorList>
            <person name="Nie H."/>
            <person name="Yang F."/>
            <person name="Zhang X."/>
            <person name="Yang J."/>
            <person name="Chen L."/>
            <person name="Wang J."/>
            <person name="Xiong Z."/>
            <person name="Peng J."/>
            <person name="Sun L."/>
            <person name="Dong J."/>
            <person name="Xue Y."/>
            <person name="Xu X."/>
            <person name="Chen S."/>
            <person name="Yao Z."/>
            <person name="Shen Y."/>
            <person name="Jin Q."/>
        </authorList>
    </citation>
    <scope>NUCLEOTIDE SEQUENCE [LARGE SCALE GENOMIC DNA]</scope>
    <source>
        <strain>8401</strain>
    </source>
</reference>
<dbReference type="EMBL" id="CP000266">
    <property type="protein sequence ID" value="ABF03871.1"/>
    <property type="molecule type" value="Genomic_DNA"/>
</dbReference>
<dbReference type="RefSeq" id="WP_001196515.1">
    <property type="nucleotide sequence ID" value="NC_008258.1"/>
</dbReference>
<dbReference type="SMR" id="Q0T494"/>
<dbReference type="KEGG" id="sfv:SFV_1702"/>
<dbReference type="HOGENOM" id="CLU_124502_1_1_6"/>
<dbReference type="UniPathway" id="UPA00266"/>
<dbReference type="Proteomes" id="UP000000659">
    <property type="component" value="Chromosome"/>
</dbReference>
<dbReference type="GO" id="GO:0005737">
    <property type="term" value="C:cytoplasm"/>
    <property type="evidence" value="ECO:0007669"/>
    <property type="project" value="UniProtKB-SubCell"/>
</dbReference>
<dbReference type="GO" id="GO:0016226">
    <property type="term" value="P:iron-sulfur cluster assembly"/>
    <property type="evidence" value="ECO:0007669"/>
    <property type="project" value="InterPro"/>
</dbReference>
<dbReference type="GO" id="GO:0006790">
    <property type="term" value="P:sulfur compound metabolic process"/>
    <property type="evidence" value="ECO:0007669"/>
    <property type="project" value="InterPro"/>
</dbReference>
<dbReference type="FunFam" id="3.90.1010.10:FF:000004">
    <property type="entry name" value="Cysteine desulfuration protein SufE"/>
    <property type="match status" value="1"/>
</dbReference>
<dbReference type="Gene3D" id="3.90.1010.10">
    <property type="match status" value="1"/>
</dbReference>
<dbReference type="HAMAP" id="MF_01832">
    <property type="entry name" value="SufE"/>
    <property type="match status" value="1"/>
</dbReference>
<dbReference type="InterPro" id="IPR023939">
    <property type="entry name" value="Cysteine_desulfuration_SufE"/>
</dbReference>
<dbReference type="InterPro" id="IPR003808">
    <property type="entry name" value="Fe-S_metab-assoc_dom"/>
</dbReference>
<dbReference type="NCBIfam" id="NF006792">
    <property type="entry name" value="PRK09296.1"/>
    <property type="match status" value="1"/>
</dbReference>
<dbReference type="PANTHER" id="PTHR43597:SF3">
    <property type="entry name" value="CYSTEINE DESULFURATION PROTEIN SUFE"/>
    <property type="match status" value="1"/>
</dbReference>
<dbReference type="PANTHER" id="PTHR43597">
    <property type="entry name" value="SULFUR ACCEPTOR PROTEIN CSDE"/>
    <property type="match status" value="1"/>
</dbReference>
<dbReference type="Pfam" id="PF02657">
    <property type="entry name" value="SufE"/>
    <property type="match status" value="1"/>
</dbReference>
<dbReference type="SUPFAM" id="SSF82649">
    <property type="entry name" value="SufE/NifU"/>
    <property type="match status" value="1"/>
</dbReference>
<evidence type="ECO:0000255" key="1">
    <source>
        <dbReference type="HAMAP-Rule" id="MF_01832"/>
    </source>
</evidence>
<organism>
    <name type="scientific">Shigella flexneri serotype 5b (strain 8401)</name>
    <dbReference type="NCBI Taxonomy" id="373384"/>
    <lineage>
        <taxon>Bacteria</taxon>
        <taxon>Pseudomonadati</taxon>
        <taxon>Pseudomonadota</taxon>
        <taxon>Gammaproteobacteria</taxon>
        <taxon>Enterobacterales</taxon>
        <taxon>Enterobacteriaceae</taxon>
        <taxon>Shigella</taxon>
    </lineage>
</organism>
<protein>
    <recommendedName>
        <fullName evidence="1">Cysteine desulfuration protein SufE</fullName>
    </recommendedName>
</protein>
<proteinExistence type="inferred from homology"/>
<keyword id="KW-0963">Cytoplasm</keyword>
<name>SUFE_SHIF8</name>
<sequence length="138" mass="15657">MALLPDKEKLLRNFLRCANWEEKYLYIIELGQRLPELRAEDGSPQNSIQGCQSQVWIVMRQNAQGIIELQGDSDAAIVKGLIAVVFILYDQMTPQDIVNFDVRPWFEKMALTQHLTPSRSQGLEAMIRAIRAKAAALS</sequence>
<feature type="chain" id="PRO_1000070448" description="Cysteine desulfuration protein SufE">
    <location>
        <begin position="1"/>
        <end position="138"/>
    </location>
</feature>
<feature type="active site" description="Cysteine persulfide intermediate" evidence="1">
    <location>
        <position position="51"/>
    </location>
</feature>
<accession>Q0T494</accession>